<accession>P16604</accession>
<comment type="function">
    <molecule>Capsid protein VP1</molecule>
    <text evidence="2">Forms an icosahedral capsid of pseudo T=3 symmetry with capsid proteins VP2 and VP3 (By similarity). The capsid is 300 Angstroms in diameter, composed of 60 copies of each capsid protein and enclosing the viral positive strand RNA genome (By similarity). Capsid protein VP1 mainly forms the vertices of the capsid (By similarity). Capsid protein VP1 interacts with host cell receptor to provide virion attachment to target host cells (By similarity). This attachment induces virion internalization (By similarity). Tyrosine kinases are probably involved in the entry process (By similarity). After binding to its receptor, the capsid undergoes conformational changes (By similarity). Capsid protein VP1 N-terminus (that contains an amphipathic alpha-helix) and capsid protein VP4 are externalized (By similarity). Together, they shape a pore in the host membrane through which viral genome is translocated to host cell cytoplasm (By similarity).</text>
</comment>
<comment type="function">
    <molecule>Capsid protein VP2</molecule>
    <text evidence="2">Forms an icosahedral capsid of pseudo T=3 symmetry with capsid proteins VP2 and VP3 (By similarity). The capsid is 300 Angstroms in diameter, composed of 60 copies of each capsid protein and enclosing the viral positive strand RNA genome (By similarity).</text>
</comment>
<comment type="function">
    <molecule>Capsid protein VP3</molecule>
    <text evidence="2">Forms an icosahedral capsid of pseudo T=3 symmetry with capsid proteins VP2 and VP3 (By similarity). The capsid is 300 Angstroms in diameter, composed of 60 copies of each capsid protein and enclosing the viral positive strand RNA genome (By similarity).</text>
</comment>
<comment type="function">
    <molecule>Capsid protein VP4</molecule>
    <text evidence="2">Lies on the inner surface of the capsid shell (By similarity). After binding to the host receptor, the capsid undergoes conformational changes (By similarity). Capsid protein VP4 is released, Capsid protein VP1 N-terminus is externalized, and together, they shape a pore in the host membrane through which the viral genome is translocated into the host cell cytoplasm (By similarity).</text>
</comment>
<comment type="function">
    <molecule>Capsid protein VP0</molecule>
    <text evidence="2">Component of immature procapsids, which is cleaved into capsid proteins VP4 and VP2 after maturation (By similarity). Allows the capsid to remain inactive before the maturation step (By similarity).</text>
</comment>
<comment type="function">
    <molecule>Protease 2A</molecule>
    <text evidence="2 3">Cysteine protease that cleaves viral polyprotein and specific host proteins (By similarity). It is responsible for the autocatalytic cleavage between the P1 and P2 regions, which is the first cleavage occurring in the polyprotein (By similarity). Also cleaves the host translation initiation factor EIF4G1, in order to shut down the capped cellular mRNA translation (By similarity). Inhibits the host nucleus-cytoplasm protein and RNA trafficking by cleaving host members of the nuclear pores (By similarity). Counteracts stress granule formation probably by antagonizing its assembly or promoting its dissassembly (By similarity).</text>
</comment>
<comment type="function">
    <molecule>Protein 2B</molecule>
    <text evidence="2">Plays an essential role in the virus replication cycle by acting as a viroporin. Creates a pore in the host endoplasmic reticulum and as a consequence releases Ca2+ in the cytoplasm of infected cell. In turn, high levels of cytoplasmic calcium may trigger membrane trafficking and transport of viral ER-associated proteins to viroplasms, sites of viral genome replication.</text>
</comment>
<comment type="function">
    <molecule>Protein 2C</molecule>
    <text evidence="2">Induces and associates with structural rearrangements of intracellular membranes. Displays RNA-binding, nucleotide binding and NTPase activities. May play a role in virion morphogenesis and viral RNA encapsidation by interacting with the capsid protein VP3.</text>
</comment>
<comment type="function">
    <molecule>Protein 3AB</molecule>
    <text evidence="2">Localizes the viral replication complex to the surface of membranous vesicles. Together with protein 3CD binds the Cis-Active RNA Element (CRE) which is involved in RNA synthesis initiation. Acts as a cofactor to stimulate the activity of 3D polymerase, maybe through a nucleid acid chaperone activity.</text>
</comment>
<comment type="function">
    <molecule>Protein 3A</molecule>
    <text evidence="2">Localizes the viral replication complex to the surface of membranous vesicles (By similarity). It inhibits host cell endoplasmic reticulum-to-Golgi apparatus transport and causes the disassembly of the Golgi complex, possibly through GBF1 interaction (By similarity). This would result in depletion of MHC, trail receptors and IFN receptors at the host cell surface (By similarity). Plays an essential role in viral RNA replication by recruiting ACBD3 and PI4KB at the viral replication sites, thereby allowing the formation of the rearranged membranous structures where viral replication takes place (By similarity).</text>
</comment>
<comment type="function">
    <molecule>Viral protein genome-linked</molecule>
    <text evidence="2">Acts as a primer for viral RNA replication and remains covalently bound to viral genomic RNA. VPg is uridylylated prior to priming replication into VPg-pUpU. The oriI viral genomic sequence may act as a template for this. The VPg-pUpU is then used as primer on the genomic RNA poly(A) by the RNA-dependent RNA polymerase to replicate the viral genome. During genome replication, the VPg-RNA linkage is removed by the host TDP2, thereby accelerating replication. During the late stage of the replication cycle, host TDP2 is excluded from sites of viral RNA synthesis and encapsidation, allowing for the generation of progeny virions.</text>
</comment>
<comment type="function">
    <molecule>Protein 3CD</molecule>
    <text evidence="2">Involved in the viral replication complex and viral polypeptide maturation. It exhibits protease activity with a specificity and catalytic efficiency that is different from protease 3C. Protein 3CD lacks polymerase activity. Protein 3CD binds to the 5'UTR of the viral genome.</text>
</comment>
<comment type="function">
    <molecule>Protease 3C</molecule>
    <text evidence="2 4 5">Major viral protease that mediates proteolytic processing of the polyprotein (By similarity). Cleaves host EIF5B, contributing to host translation shutoff (By similarity). Also cleaves host PABPC1, contributing to host translation shutoff (By similarity). Cleaves host NLRP1, triggers host N-glycine-mediated degradation of the autoinhibitory NLRP1 N-terminal fragment (By similarity).</text>
</comment>
<comment type="function">
    <molecule>RNA-directed RNA polymerase</molecule>
    <text evidence="2">Replicates the viral genomic RNA on the surface of intracellular membranes. May form linear arrays of subunits that propagate along a strong head-to-tail interaction called interface-I. Covalently attaches UMP to a tyrosine of VPg, which is used to prime RNA synthesis. The positive stranded RNA genome is first replicated at virus induced membranous vesicles, creating a dsRNA genomic replication form. This dsRNA is then used as template to synthesize positive stranded RNA genomes. ss(+)RNA genomes are either translated, replicated or encapsidated.</text>
</comment>
<comment type="catalytic activity">
    <molecule>Protein 2C</molecule>
    <reaction evidence="2">
        <text>a ribonucleoside 5'-triphosphate + H2O = a ribonucleoside 5'-diphosphate + phosphate + H(+)</text>
        <dbReference type="Rhea" id="RHEA:23680"/>
        <dbReference type="ChEBI" id="CHEBI:15377"/>
        <dbReference type="ChEBI" id="CHEBI:15378"/>
        <dbReference type="ChEBI" id="CHEBI:43474"/>
        <dbReference type="ChEBI" id="CHEBI:57930"/>
        <dbReference type="ChEBI" id="CHEBI:61557"/>
        <dbReference type="EC" id="3.6.1.15"/>
    </reaction>
</comment>
<comment type="catalytic activity">
    <molecule>Protease 2A</molecule>
    <reaction evidence="2">
        <text>Selective cleavage of Tyr-|-Gly bond in the picornavirus polyprotein.</text>
        <dbReference type="EC" id="3.4.22.29"/>
    </reaction>
</comment>
<comment type="catalytic activity">
    <molecule>RNA-directed RNA polymerase</molecule>
    <reaction evidence="10">
        <text>RNA(n) + a ribonucleoside 5'-triphosphate = RNA(n+1) + diphosphate</text>
        <dbReference type="Rhea" id="RHEA:21248"/>
        <dbReference type="Rhea" id="RHEA-COMP:14527"/>
        <dbReference type="Rhea" id="RHEA-COMP:17342"/>
        <dbReference type="ChEBI" id="CHEBI:33019"/>
        <dbReference type="ChEBI" id="CHEBI:61557"/>
        <dbReference type="ChEBI" id="CHEBI:140395"/>
        <dbReference type="EC" id="2.7.7.48"/>
    </reaction>
</comment>
<comment type="catalytic activity">
    <molecule>Protease 3C</molecule>
    <reaction evidence="12">
        <text>Selective cleavage of Gln-|-Gly bond in the poliovirus polyprotein. In other picornavirus reactions Glu may be substituted for Gln, and Ser or Thr for Gly.</text>
        <dbReference type="EC" id="3.4.22.28"/>
    </reaction>
</comment>
<comment type="cofactor">
    <molecule>RNA-directed RNA polymerase</molecule>
    <cofactor evidence="2">
        <name>Mg(2+)</name>
        <dbReference type="ChEBI" id="CHEBI:18420"/>
    </cofactor>
    <text evidence="2 5">Binds 2 magnesium ions that constitute a dinuclear catalytic metal center (By similarity). The magnesium ions are not prebound but only present for catalysis (By similarity). Requires the presence of 3CDpro or 3CPro (By similarity).</text>
</comment>
<comment type="activity regulation">
    <molecule>RNA-directed RNA polymerase</molecule>
    <text evidence="2">Replication or transcription is subject to high level of random mutations by the nucleotide analog ribavirin.</text>
</comment>
<comment type="subunit">
    <molecule>Capsid protein VP0</molecule>
    <text evidence="2">Interacts with capsid protein VP1 and capsid protein VP3 to form heterotrimeric protomers.</text>
</comment>
<comment type="subunit">
    <molecule>Capsid protein VP1</molecule>
    <text evidence="2">Interacts with capsid protein VP0, and capsid protein VP3 to form heterotrimeric protomers (By similarity). Five protomers subsequently associate to form pentamers which serve as building blocks for the capsid (By similarity). Interacts with capsid protein VP2, capsid protein VP3 and capsid protein VP4 following cleavage of capsid protein VP0 (By similarity).</text>
</comment>
<comment type="subunit">
    <molecule>Capsid protein VP2</molecule>
    <text evidence="2">Interacts with capsid protein VP1 and capsid protein VP3 in the mature capsid.</text>
</comment>
<comment type="subunit">
    <molecule>Capsid protein VP3</molecule>
    <text evidence="2">Interacts with capsid protein VP0 and capsid protein VP1 to form heterotrimeric protomers (By similarity). Five protomers subsequently associate to form pentamers which serve as building blocks for the capsid (By similarity). Interacts with capsid protein VP4 in the mature capsid (By similarity). Interacts with protein 2C; this interaction may be important for virion morphogenesis (By similarity).</text>
</comment>
<comment type="subunit">
    <molecule>Capsid protein VP4</molecule>
    <text evidence="2">Interacts with capsid protein VP1 and capsid protein VP3.</text>
</comment>
<comment type="subunit">
    <molecule>Protease 2A</molecule>
    <text evidence="6">Homodimer.</text>
</comment>
<comment type="subunit">
    <molecule>Protein 2C</molecule>
    <text evidence="2">Homohexamer; forms a hexameric ring structure with 6-fold symmetry characteristic of AAA+ ATPases (By similarity). Interacts (via N-terminus) with host RTN3 (via reticulon domain); this interaction is important for viral replication (By similarity). Interacts with capsid protein VP3; this interaction may be important for virion morphogenesis (By similarity).</text>
</comment>
<comment type="subunit">
    <molecule>Protein 3AB</molecule>
    <text evidence="2">Interacts with protein 3CD.</text>
</comment>
<comment type="subunit">
    <molecule>Protein 3A</molecule>
    <text evidence="2">Homodimer (By similarity). Interacts with host GBF1 (By similarity). Interacts (via GOLD domain) with host ACBD3 (via GOLD domain); this interaction allows the formation of a viral protein 3A/ACBD3 heterotetramer with a 2:2 stoichiometry, which will stimulate the recruitment of host PI4KB in order to synthesize PI4P at the viral RNA replication sites (By similarity).</text>
</comment>
<comment type="subunit">
    <molecule>Viral protein genome-linked</molecule>
    <text evidence="2">Interacts with RNA-directed RNA polymerase.</text>
</comment>
<comment type="subunit">
    <molecule>Protein 3CD</molecule>
    <text evidence="2">Interacts with protein 3AB and with RNA-directed RNA polymerase.</text>
</comment>
<comment type="subunit">
    <molecule>RNA-directed RNA polymerase</molecule>
    <text evidence="2">Interacts with Viral protein genome-linked and with protein 3CD.</text>
</comment>
<comment type="subcellular location">
    <molecule>Capsid protein VP0</molecule>
    <subcellularLocation>
        <location>Virion</location>
    </subcellularLocation>
    <subcellularLocation>
        <location evidence="13">Host cytoplasm</location>
    </subcellularLocation>
</comment>
<comment type="subcellular location">
    <molecule>Capsid protein VP4</molecule>
    <subcellularLocation>
        <location>Virion</location>
    </subcellularLocation>
</comment>
<comment type="subcellular location">
    <molecule>Capsid protein VP2</molecule>
    <subcellularLocation>
        <location evidence="2">Virion</location>
    </subcellularLocation>
    <subcellularLocation>
        <location evidence="13">Host cytoplasm</location>
    </subcellularLocation>
</comment>
<comment type="subcellular location">
    <molecule>Capsid protein VP3</molecule>
    <subcellularLocation>
        <location evidence="2">Virion</location>
    </subcellularLocation>
    <subcellularLocation>
        <location evidence="13">Host cytoplasm</location>
    </subcellularLocation>
</comment>
<comment type="subcellular location">
    <molecule>Capsid protein VP1</molecule>
    <subcellularLocation>
        <location evidence="2">Virion</location>
    </subcellularLocation>
    <subcellularLocation>
        <location evidence="13">Host cytoplasm</location>
    </subcellularLocation>
</comment>
<comment type="subcellular location">
    <molecule>Protein 2B</molecule>
    <subcellularLocation>
        <location evidence="13">Host cytoplasmic vesicle membrane</location>
        <topology evidence="13">Peripheral membrane protein</topology>
        <orientation evidence="13">Cytoplasmic side</orientation>
    </subcellularLocation>
    <text>Probably localizes to the surface of intracellular membrane vesicles that are induced after virus infection as the site for viral RNA replication. These vesicles are derived from the endoplasmic reticulum.</text>
</comment>
<comment type="subcellular location">
    <molecule>Protein 2C</molecule>
    <subcellularLocation>
        <location evidence="13">Host cytoplasmic vesicle membrane</location>
        <topology evidence="13">Peripheral membrane protein</topology>
        <orientation evidence="13">Cytoplasmic side</orientation>
    </subcellularLocation>
    <text>Probably localizes to the surface of intracellular membrane vesicles that are induced after virus infection as the site for viral RNA replication. These vesicles are derived from the endoplasmic reticulum.</text>
</comment>
<comment type="subcellular location">
    <molecule>Protein 3A</molecule>
    <subcellularLocation>
        <location evidence="13">Host cytoplasmic vesicle membrane</location>
        <topology evidence="13">Peripheral membrane protein</topology>
        <orientation evidence="13">Cytoplasmic side</orientation>
    </subcellularLocation>
    <text>Probably localizes to the surface of intracellular membrane vesicles that are induced after virus infection as the site for viral RNA replication. These vesicles are derived from the endoplasmic reticulum.</text>
</comment>
<comment type="subcellular location">
    <molecule>Protein 3AB</molecule>
    <subcellularLocation>
        <location evidence="13">Host cytoplasmic vesicle membrane</location>
        <topology evidence="13">Peripheral membrane protein</topology>
        <orientation evidence="13">Cytoplasmic side</orientation>
    </subcellularLocation>
    <text>Probably localizes to the surface of intracellular membrane vesicles that are induced after virus infection as the site for viral RNA replication. These vesicles are derived from the endoplasmic reticulum.</text>
</comment>
<comment type="subcellular location">
    <molecule>Viral protein genome-linked</molecule>
    <subcellularLocation>
        <location evidence="2">Virion</location>
    </subcellularLocation>
    <subcellularLocation>
        <location evidence="7">Host cytoplasm</location>
    </subcellularLocation>
</comment>
<comment type="subcellular location">
    <molecule>Protease 3C</molecule>
    <subcellularLocation>
        <location>Host cytoplasm</location>
    </subcellularLocation>
</comment>
<comment type="subcellular location">
    <molecule>Protein 3CD</molecule>
    <subcellularLocation>
        <location evidence="2">Host nucleus</location>
    </subcellularLocation>
    <subcellularLocation>
        <location evidence="2">Host cytoplasm</location>
    </subcellularLocation>
    <subcellularLocation>
        <location evidence="13">Host cytoplasmic vesicle membrane</location>
        <topology evidence="13">Peripheral membrane protein</topology>
        <orientation evidence="13">Cytoplasmic side</orientation>
    </subcellularLocation>
    <text>Probably localizes to the surface of intracellular membrane vesicles that are induced after virus infection as the site for viral RNA replication. These vesicles are derived from the endoplasmic reticulum.</text>
</comment>
<comment type="subcellular location">
    <molecule>RNA-directed RNA polymerase</molecule>
    <subcellularLocation>
        <location evidence="13">Host cytoplasmic vesicle membrane</location>
        <topology evidence="13">Peripheral membrane protein</topology>
        <orientation evidence="13">Cytoplasmic side</orientation>
    </subcellularLocation>
    <text>Probably localizes to the surface of intracellular membrane vesicles that are induced after virus infection as the site for viral RNA replication. These vesicles are derived from the endoplasmic reticulum.</text>
</comment>
<comment type="domain">
    <molecule>Protein 2C</molecule>
    <text evidence="1 2">The N-terminus has membrane-binding (By similarity). The N-terminus also displays RNA-binding properties (By similarity). The N-terminus is involved in oligomerization (By similarity). The central part contains an ATPase domain and a degenerate C4-type zinc-finger with only 3 cysteines (By similarity). The C-terminus is involved in RNA-binding (By similarity). The extreme C-terminus contains a region involved in oligomerization (By similarity).</text>
</comment>
<comment type="PTM">
    <molecule>Genome polyprotein</molecule>
    <text evidence="2">Specific enzymatic cleavages in vivo by the viral proteases yield processing intermediates and the mature proteins.</text>
</comment>
<comment type="PTM">
    <molecule>Capsid protein VP0</molecule>
    <text evidence="2">Myristoylation is required for the formation of pentamers during virus assembly. Further assembly of 12 pentamers and a molecule of genomic RNA generates the provirion.</text>
</comment>
<comment type="PTM">
    <molecule>Capsid protein VP0</molecule>
    <text evidence="2">During virion maturation, immature virions are rendered infectious following cleavage of VP0 into VP4 and VP2. This maturation seems to be an autocatalytic event triggered by the presence of RNA in the capsid and it is followed by a conformational change infectious virion.</text>
</comment>
<comment type="PTM">
    <molecule>Capsid protein VP4</molecule>
    <text evidence="2">Myristoylation is required during RNA encapsidation and formation of the mature virus particle.</text>
</comment>
<comment type="PTM">
    <molecule>Viral protein genome-linked</molecule>
    <text evidence="2">VPg is uridylylated by the polymerase into VPg-pUpU. This acts as a nucleotide-peptide primer for the genomic RNA replication.</text>
</comment>
<comment type="similarity">
    <text evidence="13">Belongs to the picornaviruses polyprotein family.</text>
</comment>
<keyword id="KW-1072">Activation of host autophagy by virus</keyword>
<keyword id="KW-0067">ATP-binding</keyword>
<keyword id="KW-0068">Autocatalytic cleavage</keyword>
<keyword id="KW-0167">Capsid protein</keyword>
<keyword id="KW-0191">Covalent protein-RNA linkage</keyword>
<keyword id="KW-0235">DNA replication</keyword>
<keyword id="KW-1262">Eukaryotic host gene expression shutoff by virus</keyword>
<keyword id="KW-1193">Eukaryotic host translation shutoff by virus</keyword>
<keyword id="KW-0347">Helicase</keyword>
<keyword id="KW-1035">Host cytoplasm</keyword>
<keyword id="KW-1036">Host cytoplasmic vesicle</keyword>
<keyword id="KW-1190">Host gene expression shutoff by virus</keyword>
<keyword id="KW-1043">Host membrane</keyword>
<keyword id="KW-1192">Host mRNA suppression by virus</keyword>
<keyword id="KW-1048">Host nucleus</keyword>
<keyword id="KW-0945">Host-virus interaction</keyword>
<keyword id="KW-0378">Hydrolase</keyword>
<keyword id="KW-1090">Inhibition of host innate immune response by virus</keyword>
<keyword id="KW-1099">Inhibition of host mRNA nuclear export by virus</keyword>
<keyword id="KW-1088">Inhibition of host RIG-I by virus</keyword>
<keyword id="KW-1113">Inhibition of host RLR pathway by virus</keyword>
<keyword id="KW-0407">Ion channel</keyword>
<keyword id="KW-0406">Ion transport</keyword>
<keyword id="KW-0449">Lipoprotein</keyword>
<keyword id="KW-0460">Magnesium</keyword>
<keyword id="KW-0472">Membrane</keyword>
<keyword id="KW-0479">Metal-binding</keyword>
<keyword id="KW-0519">Myristate</keyword>
<keyword id="KW-0547">Nucleotide-binding</keyword>
<keyword id="KW-0548">Nucleotidyltransferase</keyword>
<keyword id="KW-0597">Phosphoprotein</keyword>
<keyword id="KW-1172">Pore-mediated penetration of viral genome into host cell</keyword>
<keyword id="KW-0645">Protease</keyword>
<keyword id="KW-0677">Repeat</keyword>
<keyword id="KW-0694">RNA-binding</keyword>
<keyword id="KW-0696">RNA-directed RNA polymerase</keyword>
<keyword id="KW-1143">T=pseudo3 icosahedral capsid protein</keyword>
<keyword id="KW-0788">Thiol protease</keyword>
<keyword id="KW-0808">Transferase</keyword>
<keyword id="KW-0813">Transport</keyword>
<keyword id="KW-1161">Viral attachment to host cell</keyword>
<keyword id="KW-0899">Viral immunoevasion</keyword>
<keyword id="KW-1182">Viral ion channel</keyword>
<keyword id="KW-1162">Viral penetration into host cytoplasm</keyword>
<keyword id="KW-0693">Viral RNA replication</keyword>
<keyword id="KW-0946">Virion</keyword>
<keyword id="KW-1164">Virus endocytosis by host</keyword>
<keyword id="KW-1160">Virus entry into host cell</keyword>
<keyword id="KW-0862">Zinc</keyword>
<keyword id="KW-0863">Zinc-finger</keyword>
<sequence length="2185" mass="243166">MGAQVSTQKTGAHETSLSAAGNSVIHYTNINYYKDAASNSANRQDFTQDPGKFTEPVKDIMVKSMPALNSPSAEECGYSDRVRSITLGNSTITTQECANVVVGYGVWPTYLKDEEATAEDQPTQPDVATCRFYTLESVMWQQSSPGWWWKFPDALSNMGLFGQNMQYHYLGRAGYTIHVQCNASKFHQGCLLVVCVPEAEMGCATLANKPDPKSLSKGEIANMFESQNSTGETAVQANVINAGMGVGVGNLTIFPHQWINLRTNNSATIVMPYINSVPMDNMFRHNNFTLMVIPFAPLSYSTGATTYVPITVTVAPMCAEYNGLRLAGKQGLPTLSTPGSNQFLTSDDFQSPSAMPQFDVTPEMDIPGQVNNLMEIAEVDSVVPVNNTEGKVMSIEAYQIPVQSNPTNGSQVFGFPLTPGANSVLNRTLLGEILNYYAHWSGSIKLTFMFCGSAMATGKFLLAYSPPGAGAPTTRKEAMLGTHVIWDVGLQSSCVLCIPWISQTHYRYVVMDEYTAGGYITCWYQTNIVVPADAQSDCKILCFASACNDFSVRMLKDTPFIKQDNFFQGPPGEVVERAIARVADTIGSGPVNSESIPALTAAETGHTSQVVPSDTMQTRHVKNYHSRSESTVENFLCRSACVFYTTYKNHDSDGDNFAYWVINTRQVAQLRRKLEMFTYARFDLELTFVITSTQEQPTVRGQDTPVLTHQIMYVPPGGPVPTKVNSYSWQTSTNPSVFWTEGSAPPRMSIPFIGIGNAYSMFYDGWARFDKQGTYGTSTLNNMGTLYMRHVNDGGPGPIVSTVRIYFKPKHVKTWVPRPPRLCQYQKAGNVNFEPTGVTEGRTDITTMKTTGAFGQQSGAVYVGNYRVVNIHLATRADWQNCVWEDYDRDLLVSTTTAHGCDTIARCDCTAGVYFCASRNKHYPVTFEGPGLVEVQESEYYPKKHQSHVLLAAGFAEPGDCGGILRCQHGVIGIVTMGGEGVVGFADVRDLLWLEDDAMEQGVRDYVEQLGNAFGSGFTNQICEQVTLLKESLIGQDSILEKSLKALVKIVSALVIVVRNHDDLITVTATLALIGCTTSPWRWLKQKVSQYYGIPMAERQNSGWLKKFTEMTNACKGMEWIAIKIQKFIEWLKVKILPEVKEKHEFLNRLKQLPLLESQIATIEQSAPSQSDQEQLFSNVQYFAHYCRKYAPLYAAEAKRVFSLEKKMSNYIQFKSKCRIEPVCLLLHGSPGAGKSVATNLIGRSLAEKLNSSVYSLPPDPDHFDGYKQQAVVIMDDLCQNPDGKDVSLFCQMVSSVDFVPPMAALEEKGILFTSPFVLASTNAGSVNAPTVSDSRALVRRFHFDMNIEVVSMYSQNGKINMPMAVKTCDEECCPVNFKKCCPLVCGKAIQFIDRRTQVRYSLDMLVTEMFREYNHRHSVGATLEALFQGPPVYREIKISVAPETPPPPAVADLLKSVDSEAVREYCKEKGWLIPEVDSTLQIEKHVNRAFICLQALTTFVSVAGIIYIIYKLFAGFQGAYTGMPNQKPKVPTLRQAKVQGPAFEFAVAMMKRNASTVKTEYGEFTMLGIYDRWAVLPRHAKPGPTILMNDQVVGVLDAKELVDKDGTNLELTLLKLNRNEKFRDIRGFLAREEVEANEAVLAINTSKFPNMYIPVGRVTDYGFLNLGGTPTKRMLMYNFPTRAGQCGGVLMSTGKVLGIHVGGNGHQGFSAALLRHYFNEEQGEIEFVESSKDAGFPVINTPSKTKLEPSVFHHVFEGNKEPAVLRNGDPRLKANFEEAIFSKYIGNVNTHVDEYMMEAVDYYAGQLATLDISTEPMKLEDAVYGTEGLEALDLTTSAGYPYVALGIKKRDILSKKTRDLTKLKECMDKYGLNLPMVTYVKDELRSADKVAKGKSRLIEASSLNDSVAMRQTFGNLYKTFHLNPGIVTGSAVGCDPDVFWSKIPVMLDGHLIAFDYSGYDASLSPVWFTCLKLLLEKLGYTNKETNYIDYLCNSHHLYRDKHYFVRGGMPSGCSGTSIFNSMINNIIIRTLMLKVYKGIDLDQFRMIAYGDDVIASYPWPIDASLLAEAGKGYGLIMTPADKGECFNEVTWTNVTFLKRYFRADEQYPFLVHPVMPMKDIHESIRWTKDPKNTQDHVRSLCLLAWHNGEHEYEEFIRKIRSVPVGRCLSLPAFSTLRRKWLDSF</sequence>
<evidence type="ECO:0000250" key="1">
    <source>
        <dbReference type="UniProtKB" id="B9VUU3"/>
    </source>
</evidence>
<evidence type="ECO:0000250" key="2">
    <source>
        <dbReference type="UniProtKB" id="P03300"/>
    </source>
</evidence>
<evidence type="ECO:0000250" key="3">
    <source>
        <dbReference type="UniProtKB" id="P03301"/>
    </source>
</evidence>
<evidence type="ECO:0000250" key="4">
    <source>
        <dbReference type="UniProtKB" id="P03303"/>
    </source>
</evidence>
<evidence type="ECO:0000250" key="5">
    <source>
        <dbReference type="UniProtKB" id="P03313"/>
    </source>
</evidence>
<evidence type="ECO:0000250" key="6">
    <source>
        <dbReference type="UniProtKB" id="P04936"/>
    </source>
</evidence>
<evidence type="ECO:0000250" key="7">
    <source>
        <dbReference type="UniProtKB" id="Q66478"/>
    </source>
</evidence>
<evidence type="ECO:0000250" key="8">
    <source>
        <dbReference type="UniProtKB" id="Q9QF31"/>
    </source>
</evidence>
<evidence type="ECO:0000255" key="9"/>
<evidence type="ECO:0000255" key="10">
    <source>
        <dbReference type="PROSITE-ProRule" id="PRU00539"/>
    </source>
</evidence>
<evidence type="ECO:0000255" key="11">
    <source>
        <dbReference type="PROSITE-ProRule" id="PRU00551"/>
    </source>
</evidence>
<evidence type="ECO:0000255" key="12">
    <source>
        <dbReference type="PROSITE-ProRule" id="PRU01222"/>
    </source>
</evidence>
<evidence type="ECO:0000305" key="13"/>
<organism>
    <name type="scientific">Swine vesicular disease virus (strain H/3 '76)</name>
    <name type="common">SVDV</name>
    <dbReference type="NCBI Taxonomy" id="12076"/>
    <lineage>
        <taxon>Viruses</taxon>
        <taxon>Riboviria</taxon>
        <taxon>Orthornavirae</taxon>
        <taxon>Pisuviricota</taxon>
        <taxon>Pisoniviricetes</taxon>
        <taxon>Picornavirales</taxon>
        <taxon>Picornaviridae</taxon>
        <taxon>Ensavirinae</taxon>
        <taxon>Enterovirus</taxon>
        <taxon>Enterovirus B</taxon>
    </lineage>
</organism>
<name>POLG_SVDVH</name>
<proteinExistence type="inferred from homology"/>
<reference key="1">
    <citation type="journal article" date="1989" name="J. Gen. Virol.">
        <title>The complete nucleotide sequence of swine vesicular disease virus.</title>
        <authorList>
            <person name="Inoue T."/>
            <person name="Suzuki T."/>
            <person name="Sekiguchi K."/>
        </authorList>
    </citation>
    <scope>NUCLEOTIDE SEQUENCE [GENOMIC RNA]</scope>
</reference>
<feature type="initiator methionine" description="Removed; by host" evidence="2">
    <location>
        <position position="1"/>
    </location>
</feature>
<feature type="chain" id="PRO_0000426671" description="Genome polyprotein">
    <location>
        <begin position="2"/>
        <end position="2185"/>
    </location>
</feature>
<feature type="chain" id="PRO_0000426672" description="P1">
    <location>
        <begin position="2"/>
        <end position="851"/>
    </location>
</feature>
<feature type="chain" id="PRO_0000426673" description="Capsid protein VP0">
    <location>
        <begin position="2"/>
        <end position="330"/>
    </location>
</feature>
<feature type="chain" id="PRO_0000426674" description="Capsid protein VP4">
    <location>
        <begin position="2"/>
        <end position="69"/>
    </location>
</feature>
<feature type="chain" id="PRO_0000426675" description="Capsid protein VP2">
    <location>
        <begin position="70"/>
        <end position="330"/>
    </location>
</feature>
<feature type="chain" id="PRO_0000426676" description="Capsid protein VP3">
    <location>
        <begin position="331"/>
        <end position="568"/>
    </location>
</feature>
<feature type="chain" id="PRO_0000426677" description="Capsid protein VP1">
    <location>
        <begin position="569"/>
        <end position="851"/>
    </location>
</feature>
<feature type="chain" id="PRO_0000426678" description="P2">
    <location>
        <begin position="852"/>
        <end position="1429"/>
    </location>
</feature>
<feature type="chain" id="PRO_0000426679" description="Protease 2A">
    <location>
        <begin position="852"/>
        <end position="1001"/>
    </location>
</feature>
<feature type="chain" id="PRO_0000040151" description="Protein 2B">
    <location>
        <begin position="1002"/>
        <end position="1100"/>
    </location>
</feature>
<feature type="chain" id="PRO_0000040152" description="Protein 2C">
    <location>
        <begin position="1101"/>
        <end position="1429"/>
    </location>
</feature>
<feature type="chain" id="PRO_0000426680" description="P3">
    <location>
        <begin position="1430"/>
        <end position="2185"/>
    </location>
</feature>
<feature type="chain" id="PRO_0000426681" description="Protein 3AB">
    <location>
        <begin position="1430"/>
        <end position="1540"/>
    </location>
</feature>
<feature type="chain" id="PRO_0000040153" description="Protein 3A">
    <location>
        <begin position="1430"/>
        <end position="1518"/>
    </location>
</feature>
<feature type="chain" id="PRO_0000426682" description="Viral protein genome-linked">
    <location>
        <begin position="1519"/>
        <end position="1540"/>
    </location>
</feature>
<feature type="chain" id="PRO_0000426683" description="Protein 3CD">
    <location>
        <begin position="1541"/>
        <end position="2185"/>
    </location>
</feature>
<feature type="chain" id="PRO_0000426684" description="Protease 3C">
    <location>
        <begin position="1541"/>
        <end position="1723"/>
    </location>
</feature>
<feature type="chain" id="PRO_0000426685" description="RNA-directed RNA polymerase">
    <location>
        <begin position="1724"/>
        <end position="2185"/>
    </location>
</feature>
<feature type="topological domain" description="Cytoplasmic" evidence="9">
    <location>
        <begin position="2"/>
        <end position="1495"/>
    </location>
</feature>
<feature type="intramembrane region" evidence="9">
    <location>
        <begin position="1496"/>
        <end position="1511"/>
    </location>
</feature>
<feature type="topological domain" description="Cytoplasmic" evidence="9">
    <location>
        <begin position="1512"/>
        <end position="2185"/>
    </location>
</feature>
<feature type="domain" description="SF3 helicase" evidence="11">
    <location>
        <begin position="1205"/>
        <end position="1361"/>
    </location>
</feature>
<feature type="domain" description="Peptidase C3" evidence="12">
    <location>
        <begin position="1541"/>
        <end position="1719"/>
    </location>
</feature>
<feature type="domain" description="RdRp catalytic" evidence="10">
    <location>
        <begin position="1950"/>
        <end position="2066"/>
    </location>
</feature>
<feature type="zinc finger region" description="C4-type; degenerate" evidence="1">
    <location>
        <begin position="1369"/>
        <end position="1386"/>
    </location>
</feature>
<feature type="region of interest" description="Amphipathic alpha-helix" evidence="9">
    <location>
        <begin position="566"/>
        <end position="582"/>
    </location>
</feature>
<feature type="region of interest" description="Oligomerization" evidence="2">
    <location>
        <begin position="1101"/>
        <end position="1239"/>
    </location>
</feature>
<feature type="region of interest" description="Membrane-binding" evidence="2">
    <location>
        <begin position="1101"/>
        <end position="1173"/>
    </location>
</feature>
<feature type="region of interest" description="RNA-binding" evidence="2">
    <location>
        <begin position="1122"/>
        <end position="1126"/>
    </location>
</feature>
<feature type="region of interest" description="RNA-binding" evidence="2">
    <location>
        <begin position="1413"/>
        <end position="1420"/>
    </location>
</feature>
<feature type="region of interest" description="Oligomerization" evidence="2">
    <location>
        <begin position="1424"/>
        <end position="1429"/>
    </location>
</feature>
<feature type="active site" description="For protease 2A activity" evidence="2">
    <location>
        <position position="872"/>
    </location>
</feature>
<feature type="active site" description="For protease 2A activity" evidence="2">
    <location>
        <position position="890"/>
    </location>
</feature>
<feature type="active site" description="For protease 2A activity" evidence="2">
    <location>
        <position position="961"/>
    </location>
</feature>
<feature type="active site" description="For protease 3C activity" evidence="12">
    <location>
        <position position="1580"/>
    </location>
</feature>
<feature type="active site" description="For protease 3C activity" evidence="12">
    <location>
        <position position="1611"/>
    </location>
</feature>
<feature type="active site" description="For protease 3C activity" evidence="12">
    <location>
        <position position="1687"/>
    </location>
</feature>
<feature type="binding site" evidence="8">
    <location>
        <position position="907"/>
    </location>
    <ligand>
        <name>Zn(2+)</name>
        <dbReference type="ChEBI" id="CHEBI:29105"/>
        <label>1</label>
        <note>structural</note>
    </ligand>
</feature>
<feature type="binding site" evidence="8">
    <location>
        <position position="909"/>
    </location>
    <ligand>
        <name>Zn(2+)</name>
        <dbReference type="ChEBI" id="CHEBI:29105"/>
        <label>1</label>
        <note>structural</note>
    </ligand>
</feature>
<feature type="binding site" evidence="8">
    <location>
        <position position="967"/>
    </location>
    <ligand>
        <name>Zn(2+)</name>
        <dbReference type="ChEBI" id="CHEBI:29105"/>
        <label>1</label>
        <note>structural</note>
    </ligand>
</feature>
<feature type="binding site" evidence="8">
    <location>
        <position position="969"/>
    </location>
    <ligand>
        <name>Zn(2+)</name>
        <dbReference type="ChEBI" id="CHEBI:29105"/>
        <label>1</label>
        <note>structural</note>
    </ligand>
</feature>
<feature type="binding site" evidence="1">
    <location>
        <position position="1369"/>
    </location>
    <ligand>
        <name>Zn(2+)</name>
        <dbReference type="ChEBI" id="CHEBI:29105"/>
        <label>2</label>
    </ligand>
</feature>
<feature type="binding site" evidence="1">
    <location>
        <position position="1381"/>
    </location>
    <ligand>
        <name>Zn(2+)</name>
        <dbReference type="ChEBI" id="CHEBI:29105"/>
        <label>2</label>
    </ligand>
</feature>
<feature type="binding site" evidence="1">
    <location>
        <position position="1386"/>
    </location>
    <ligand>
        <name>Zn(2+)</name>
        <dbReference type="ChEBI" id="CHEBI:29105"/>
        <label>2</label>
    </ligand>
</feature>
<feature type="binding site" evidence="2">
    <location>
        <position position="1956"/>
    </location>
    <ligand>
        <name>Mg(2+)</name>
        <dbReference type="ChEBI" id="CHEBI:18420"/>
        <label>1</label>
        <note>catalytic; for RdRp activity</note>
    </ligand>
</feature>
<feature type="binding site" evidence="2">
    <location>
        <position position="1956"/>
    </location>
    <ligand>
        <name>Mg(2+)</name>
        <dbReference type="ChEBI" id="CHEBI:18420"/>
        <label>2</label>
        <note>catalytic; for RdRp activity</note>
    </ligand>
</feature>
<feature type="binding site" evidence="2">
    <location>
        <position position="2052"/>
    </location>
    <ligand>
        <name>Mg(2+)</name>
        <dbReference type="ChEBI" id="CHEBI:18420"/>
        <label>1</label>
        <note>catalytic; for RdRp activity</note>
    </ligand>
</feature>
<feature type="binding site" evidence="2">
    <location>
        <position position="2052"/>
    </location>
    <ligand>
        <name>Mg(2+)</name>
        <dbReference type="ChEBI" id="CHEBI:18420"/>
        <label>2</label>
        <note>catalytic; for RdRp activity</note>
    </ligand>
</feature>
<feature type="site" description="Cleavage; by autolysis" evidence="2">
    <location>
        <begin position="69"/>
        <end position="70"/>
    </location>
</feature>
<feature type="site" description="Cleavage; by protease 3C" evidence="3">
    <location>
        <begin position="330"/>
        <end position="331"/>
    </location>
</feature>
<feature type="site" description="Cleavage; by autolysis" evidence="3">
    <location>
        <begin position="851"/>
        <end position="852"/>
    </location>
</feature>
<feature type="site" description="Cleavage; by protease 3C" evidence="3">
    <location>
        <begin position="1001"/>
        <end position="1002"/>
    </location>
</feature>
<feature type="site" description="Cleavage; by protease 3C" evidence="3">
    <location>
        <begin position="1100"/>
        <end position="1101"/>
    </location>
</feature>
<feature type="site" description="Involved in the interaction with host RTN3" evidence="7">
    <location>
        <position position="1125"/>
    </location>
</feature>
<feature type="site" description="Cleavage; by protease 3C" evidence="3">
    <location>
        <begin position="1429"/>
        <end position="1430"/>
    </location>
</feature>
<feature type="site" description="Cleavage; by protease 3C" evidence="3">
    <location>
        <begin position="1518"/>
        <end position="1519"/>
    </location>
</feature>
<feature type="site" description="Cleavage; by protease 3C" evidence="3">
    <location>
        <begin position="1540"/>
        <end position="1541"/>
    </location>
</feature>
<feature type="site" description="Cleavage; by protease 3C" evidence="3">
    <location>
        <begin position="1723"/>
        <end position="1724"/>
    </location>
</feature>
<feature type="modified residue" description="O-(5'-phospho-RNA)-tyrosine" evidence="2">
    <location>
        <position position="1521"/>
    </location>
</feature>
<feature type="lipid moiety-binding region" description="N-myristoyl glycine; by host" evidence="2">
    <location>
        <position position="2"/>
    </location>
</feature>
<protein>
    <recommendedName>
        <fullName>Genome polyprotein</fullName>
    </recommendedName>
    <component>
        <recommendedName>
            <fullName>P1</fullName>
        </recommendedName>
    </component>
    <component>
        <recommendedName>
            <fullName>Capsid protein VP0</fullName>
        </recommendedName>
        <alternativeName>
            <fullName>VP4-VP2</fullName>
        </alternativeName>
    </component>
    <component>
        <recommendedName>
            <fullName>Capsid protein VP4</fullName>
        </recommendedName>
        <alternativeName>
            <fullName>P1A</fullName>
        </alternativeName>
        <alternativeName>
            <fullName>Virion protein 4</fullName>
        </alternativeName>
    </component>
    <component>
        <recommendedName>
            <fullName>Capsid protein VP2</fullName>
        </recommendedName>
        <alternativeName>
            <fullName>P1B</fullName>
        </alternativeName>
        <alternativeName>
            <fullName>Virion protein 2</fullName>
        </alternativeName>
    </component>
    <component>
        <recommendedName>
            <fullName>Capsid protein VP3</fullName>
        </recommendedName>
        <alternativeName>
            <fullName>P1C</fullName>
        </alternativeName>
        <alternativeName>
            <fullName>Virion protein 3</fullName>
        </alternativeName>
    </component>
    <component>
        <recommendedName>
            <fullName>Capsid protein VP1</fullName>
        </recommendedName>
        <alternativeName>
            <fullName>P1D</fullName>
        </alternativeName>
        <alternativeName>
            <fullName>Virion protein 1</fullName>
        </alternativeName>
    </component>
    <component>
        <recommendedName>
            <fullName>P2</fullName>
        </recommendedName>
    </component>
    <component>
        <recommendedName>
            <fullName>Protease 2A</fullName>
            <shortName>P2A</shortName>
            <ecNumber evidence="2">3.4.22.29</ecNumber>
        </recommendedName>
        <alternativeName>
            <fullName>Picornain 2A</fullName>
        </alternativeName>
        <alternativeName>
            <fullName>Protein 2A</fullName>
        </alternativeName>
    </component>
    <component>
        <recommendedName>
            <fullName>Protein 2B</fullName>
            <shortName>P2B</shortName>
        </recommendedName>
    </component>
    <component>
        <recommendedName>
            <fullName>Protein 2C</fullName>
            <shortName>P2C</shortName>
            <ecNumber evidence="2">3.6.1.15</ecNumber>
        </recommendedName>
    </component>
    <component>
        <recommendedName>
            <fullName>P3</fullName>
        </recommendedName>
    </component>
    <component>
        <recommendedName>
            <fullName>Protein 3AB</fullName>
        </recommendedName>
    </component>
    <component>
        <recommendedName>
            <fullName>Protein 3A</fullName>
            <shortName>P3A</shortName>
        </recommendedName>
    </component>
    <component>
        <recommendedName>
            <fullName>Viral protein genome-linked</fullName>
            <shortName>VPg</shortName>
        </recommendedName>
        <alternativeName>
            <fullName>Protein 3B</fullName>
            <shortName>P3B</shortName>
        </alternativeName>
    </component>
    <component>
        <recommendedName>
            <fullName>Protein 3CD</fullName>
            <ecNumber>3.4.22.28</ecNumber>
        </recommendedName>
    </component>
    <component>
        <recommendedName>
            <fullName evidence="12">Protease 3C</fullName>
            <ecNumber evidence="12">3.4.22.28</ecNumber>
        </recommendedName>
        <alternativeName>
            <fullName evidence="12">Picornain 3C</fullName>
            <shortName evidence="12">P3C</shortName>
        </alternativeName>
    </component>
    <component>
        <recommendedName>
            <fullName evidence="10">RNA-directed RNA polymerase</fullName>
            <shortName>RdRp</shortName>
            <ecNumber evidence="10">2.7.7.48</ecNumber>
        </recommendedName>
        <alternativeName>
            <fullName>3D polymerase</fullName>
            <shortName>3Dpol</shortName>
        </alternativeName>
        <alternativeName>
            <fullName>Protein 3D</fullName>
            <shortName>3D</shortName>
        </alternativeName>
    </component>
</protein>
<organismHost>
    <name type="scientific">Sus scrofa</name>
    <name type="common">Pig</name>
    <dbReference type="NCBI Taxonomy" id="9823"/>
</organismHost>
<dbReference type="EC" id="3.4.22.29" evidence="2"/>
<dbReference type="EC" id="3.6.1.15" evidence="2"/>
<dbReference type="EC" id="3.4.22.28" evidence="12"/>
<dbReference type="EC" id="2.7.7.48" evidence="10"/>
<dbReference type="EMBL" id="D00435">
    <property type="protein sequence ID" value="BAA00337.1"/>
    <property type="molecule type" value="Genomic_RNA"/>
</dbReference>
<dbReference type="PIR" id="A31331">
    <property type="entry name" value="GNNYSH"/>
</dbReference>
<dbReference type="SMR" id="P16604"/>
<dbReference type="MEROPS" id="C03.011"/>
<dbReference type="Proteomes" id="UP000007233">
    <property type="component" value="Genome"/>
</dbReference>
<dbReference type="GO" id="GO:0044162">
    <property type="term" value="C:host cell cytoplasmic vesicle membrane"/>
    <property type="evidence" value="ECO:0007669"/>
    <property type="project" value="UniProtKB-SubCell"/>
</dbReference>
<dbReference type="GO" id="GO:0042025">
    <property type="term" value="C:host cell nucleus"/>
    <property type="evidence" value="ECO:0007669"/>
    <property type="project" value="UniProtKB-SubCell"/>
</dbReference>
<dbReference type="GO" id="GO:0016020">
    <property type="term" value="C:membrane"/>
    <property type="evidence" value="ECO:0007669"/>
    <property type="project" value="UniProtKB-KW"/>
</dbReference>
<dbReference type="GO" id="GO:0039618">
    <property type="term" value="C:T=pseudo3 icosahedral viral capsid"/>
    <property type="evidence" value="ECO:0007669"/>
    <property type="project" value="UniProtKB-KW"/>
</dbReference>
<dbReference type="GO" id="GO:0005524">
    <property type="term" value="F:ATP binding"/>
    <property type="evidence" value="ECO:0007669"/>
    <property type="project" value="UniProtKB-KW"/>
</dbReference>
<dbReference type="GO" id="GO:0016887">
    <property type="term" value="F:ATP hydrolysis activity"/>
    <property type="evidence" value="ECO:0007669"/>
    <property type="project" value="InterPro"/>
</dbReference>
<dbReference type="GO" id="GO:0015267">
    <property type="term" value="F:channel activity"/>
    <property type="evidence" value="ECO:0007669"/>
    <property type="project" value="UniProtKB-KW"/>
</dbReference>
<dbReference type="GO" id="GO:0004197">
    <property type="term" value="F:cysteine-type endopeptidase activity"/>
    <property type="evidence" value="ECO:0007669"/>
    <property type="project" value="UniProtKB-EC"/>
</dbReference>
<dbReference type="GO" id="GO:0003723">
    <property type="term" value="F:RNA binding"/>
    <property type="evidence" value="ECO:0007669"/>
    <property type="project" value="UniProtKB-KW"/>
</dbReference>
<dbReference type="GO" id="GO:0003724">
    <property type="term" value="F:RNA helicase activity"/>
    <property type="evidence" value="ECO:0007669"/>
    <property type="project" value="InterPro"/>
</dbReference>
<dbReference type="GO" id="GO:0003968">
    <property type="term" value="F:RNA-directed RNA polymerase activity"/>
    <property type="evidence" value="ECO:0007669"/>
    <property type="project" value="UniProtKB-KW"/>
</dbReference>
<dbReference type="GO" id="GO:0005198">
    <property type="term" value="F:structural molecule activity"/>
    <property type="evidence" value="ECO:0007669"/>
    <property type="project" value="InterPro"/>
</dbReference>
<dbReference type="GO" id="GO:0008270">
    <property type="term" value="F:zinc ion binding"/>
    <property type="evidence" value="ECO:0007669"/>
    <property type="project" value="UniProtKB-KW"/>
</dbReference>
<dbReference type="GO" id="GO:0006260">
    <property type="term" value="P:DNA replication"/>
    <property type="evidence" value="ECO:0007669"/>
    <property type="project" value="UniProtKB-KW"/>
</dbReference>
<dbReference type="GO" id="GO:0006351">
    <property type="term" value="P:DNA-templated transcription"/>
    <property type="evidence" value="ECO:0007669"/>
    <property type="project" value="InterPro"/>
</dbReference>
<dbReference type="GO" id="GO:0075509">
    <property type="term" value="P:endocytosis involved in viral entry into host cell"/>
    <property type="evidence" value="ECO:0007669"/>
    <property type="project" value="UniProtKB-KW"/>
</dbReference>
<dbReference type="GO" id="GO:0034220">
    <property type="term" value="P:monoatomic ion transmembrane transport"/>
    <property type="evidence" value="ECO:0007669"/>
    <property type="project" value="UniProtKB-KW"/>
</dbReference>
<dbReference type="GO" id="GO:0006508">
    <property type="term" value="P:proteolysis"/>
    <property type="evidence" value="ECO:0007669"/>
    <property type="project" value="UniProtKB-KW"/>
</dbReference>
<dbReference type="GO" id="GO:0044694">
    <property type="term" value="P:symbiont genome entry into host cell via pore formation in plasma membrane"/>
    <property type="evidence" value="ECO:0007669"/>
    <property type="project" value="UniProtKB-KW"/>
</dbReference>
<dbReference type="GO" id="GO:0039520">
    <property type="term" value="P:symbiont-mediated activation of host autophagy"/>
    <property type="evidence" value="ECO:0000250"/>
    <property type="project" value="UniProtKB"/>
</dbReference>
<dbReference type="GO" id="GO:0039540">
    <property type="term" value="P:symbiont-mediated suppression of host cytoplasmic pattern recognition receptor signaling pathway via inhibition of RIG-I activity"/>
    <property type="evidence" value="ECO:0007669"/>
    <property type="project" value="UniProtKB-KW"/>
</dbReference>
<dbReference type="GO" id="GO:0039522">
    <property type="term" value="P:symbiont-mediated suppression of host mRNA export from nucleus"/>
    <property type="evidence" value="ECO:0007669"/>
    <property type="project" value="UniProtKB-KW"/>
</dbReference>
<dbReference type="GO" id="GO:0039694">
    <property type="term" value="P:viral RNA genome replication"/>
    <property type="evidence" value="ECO:0007669"/>
    <property type="project" value="InterPro"/>
</dbReference>
<dbReference type="GO" id="GO:0019062">
    <property type="term" value="P:virion attachment to host cell"/>
    <property type="evidence" value="ECO:0007669"/>
    <property type="project" value="UniProtKB-KW"/>
</dbReference>
<dbReference type="CDD" id="cd23213">
    <property type="entry name" value="Enterovirus_RdRp"/>
    <property type="match status" value="1"/>
</dbReference>
<dbReference type="CDD" id="cd00205">
    <property type="entry name" value="rhv_like"/>
    <property type="match status" value="3"/>
</dbReference>
<dbReference type="FunFam" id="1.20.960.20:FF:000001">
    <property type="entry name" value="Genome polyprotein"/>
    <property type="match status" value="1"/>
</dbReference>
<dbReference type="FunFam" id="2.40.10.10:FF:000018">
    <property type="entry name" value="Genome polyprotein"/>
    <property type="match status" value="1"/>
</dbReference>
<dbReference type="FunFam" id="2.40.10.10:FF:000020">
    <property type="entry name" value="Genome polyprotein"/>
    <property type="match status" value="1"/>
</dbReference>
<dbReference type="FunFam" id="2.40.10.10:FF:000022">
    <property type="entry name" value="Genome polyprotein"/>
    <property type="match status" value="1"/>
</dbReference>
<dbReference type="FunFam" id="2.60.120.20:FF:000001">
    <property type="entry name" value="Genome polyprotein"/>
    <property type="match status" value="1"/>
</dbReference>
<dbReference type="FunFam" id="2.60.120.20:FF:000002">
    <property type="entry name" value="Genome polyprotein"/>
    <property type="match status" value="1"/>
</dbReference>
<dbReference type="FunFam" id="2.60.120.20:FF:000004">
    <property type="entry name" value="Genome polyprotein"/>
    <property type="match status" value="1"/>
</dbReference>
<dbReference type="FunFam" id="3.30.70.270:FF:000008">
    <property type="entry name" value="Genome polyprotein"/>
    <property type="match status" value="1"/>
</dbReference>
<dbReference type="FunFam" id="4.10.80.10:FF:000001">
    <property type="entry name" value="Genome polyprotein"/>
    <property type="match status" value="1"/>
</dbReference>
<dbReference type="FunFam" id="4.10.880.10:FF:000001">
    <property type="entry name" value="Genome polyprotein"/>
    <property type="match status" value="1"/>
</dbReference>
<dbReference type="FunFam" id="4.10.880.10:FF:000002">
    <property type="entry name" value="Genome polyprotein"/>
    <property type="match status" value="1"/>
</dbReference>
<dbReference type="Gene3D" id="1.20.960.20">
    <property type="match status" value="1"/>
</dbReference>
<dbReference type="Gene3D" id="2.60.120.20">
    <property type="match status" value="3"/>
</dbReference>
<dbReference type="Gene3D" id="3.30.70.270">
    <property type="match status" value="1"/>
</dbReference>
<dbReference type="Gene3D" id="4.10.80.10">
    <property type="entry name" value="Picornavirus coat protein VP4"/>
    <property type="match status" value="1"/>
</dbReference>
<dbReference type="Gene3D" id="6.10.20.20">
    <property type="entry name" value="Poliovirus 3A protein-like"/>
    <property type="match status" value="1"/>
</dbReference>
<dbReference type="Gene3D" id="4.10.880.10">
    <property type="entry name" value="Poliovirus 3D polymerase Domain 1 (Nucleotidyltransferase)"/>
    <property type="match status" value="2"/>
</dbReference>
<dbReference type="Gene3D" id="2.40.10.10">
    <property type="entry name" value="Trypsin-like serine proteases"/>
    <property type="match status" value="4"/>
</dbReference>
<dbReference type="InterPro" id="IPR003593">
    <property type="entry name" value="AAA+_ATPase"/>
</dbReference>
<dbReference type="InterPro" id="IPR043502">
    <property type="entry name" value="DNA/RNA_pol_sf"/>
</dbReference>
<dbReference type="InterPro" id="IPR000605">
    <property type="entry name" value="Helicase_SF3_ssDNA/RNA_vir"/>
</dbReference>
<dbReference type="InterPro" id="IPR014759">
    <property type="entry name" value="Helicase_SF3_ssRNA_vir"/>
</dbReference>
<dbReference type="InterPro" id="IPR027417">
    <property type="entry name" value="P-loop_NTPase"/>
</dbReference>
<dbReference type="InterPro" id="IPR014838">
    <property type="entry name" value="P3A"/>
</dbReference>
<dbReference type="InterPro" id="IPR036203">
    <property type="entry name" value="P3A_soluble_dom"/>
</dbReference>
<dbReference type="InterPro" id="IPR044067">
    <property type="entry name" value="PCV_3C_PRO"/>
</dbReference>
<dbReference type="InterPro" id="IPR000081">
    <property type="entry name" value="Peptidase_C3"/>
</dbReference>
<dbReference type="InterPro" id="IPR000199">
    <property type="entry name" value="Peptidase_C3A/C3B_picornavir"/>
</dbReference>
<dbReference type="InterPro" id="IPR009003">
    <property type="entry name" value="Peptidase_S1_PA"/>
</dbReference>
<dbReference type="InterPro" id="IPR043504">
    <property type="entry name" value="Peptidase_S1_PA_chymotrypsin"/>
</dbReference>
<dbReference type="InterPro" id="IPR003138">
    <property type="entry name" value="Pico_P1A"/>
</dbReference>
<dbReference type="InterPro" id="IPR036988">
    <property type="entry name" value="Pico_P1A_sf"/>
</dbReference>
<dbReference type="InterPro" id="IPR002527">
    <property type="entry name" value="Pico_P2B"/>
</dbReference>
<dbReference type="InterPro" id="IPR001676">
    <property type="entry name" value="Picornavirus_capsid"/>
</dbReference>
<dbReference type="InterPro" id="IPR043128">
    <property type="entry name" value="Rev_trsase/Diguanyl_cyclase"/>
</dbReference>
<dbReference type="InterPro" id="IPR033703">
    <property type="entry name" value="Rhv-like"/>
</dbReference>
<dbReference type="InterPro" id="IPR001205">
    <property type="entry name" value="RNA-dir_pol_C"/>
</dbReference>
<dbReference type="InterPro" id="IPR007094">
    <property type="entry name" value="RNA-dir_pol_PSvirus"/>
</dbReference>
<dbReference type="InterPro" id="IPR029053">
    <property type="entry name" value="Viral_coat"/>
</dbReference>
<dbReference type="Pfam" id="PF08727">
    <property type="entry name" value="P3A"/>
    <property type="match status" value="1"/>
</dbReference>
<dbReference type="Pfam" id="PF00548">
    <property type="entry name" value="Peptidase_C3"/>
    <property type="match status" value="1"/>
</dbReference>
<dbReference type="Pfam" id="PF02226">
    <property type="entry name" value="Pico_P1A"/>
    <property type="match status" value="1"/>
</dbReference>
<dbReference type="Pfam" id="PF00947">
    <property type="entry name" value="Pico_P2A"/>
    <property type="match status" value="1"/>
</dbReference>
<dbReference type="Pfam" id="PF01552">
    <property type="entry name" value="Pico_P2B"/>
    <property type="match status" value="1"/>
</dbReference>
<dbReference type="Pfam" id="PF00680">
    <property type="entry name" value="RdRP_1"/>
    <property type="match status" value="1"/>
</dbReference>
<dbReference type="Pfam" id="PF00073">
    <property type="entry name" value="Rhv"/>
    <property type="match status" value="3"/>
</dbReference>
<dbReference type="Pfam" id="PF00910">
    <property type="entry name" value="RNA_helicase"/>
    <property type="match status" value="1"/>
</dbReference>
<dbReference type="SMART" id="SM00382">
    <property type="entry name" value="AAA"/>
    <property type="match status" value="1"/>
</dbReference>
<dbReference type="SUPFAM" id="SSF56672">
    <property type="entry name" value="DNA/RNA polymerases"/>
    <property type="match status" value="1"/>
</dbReference>
<dbReference type="SUPFAM" id="SSF52540">
    <property type="entry name" value="P-loop containing nucleoside triphosphate hydrolases"/>
    <property type="match status" value="1"/>
</dbReference>
<dbReference type="SUPFAM" id="SSF88633">
    <property type="entry name" value="Positive stranded ssRNA viruses"/>
    <property type="match status" value="2"/>
</dbReference>
<dbReference type="SUPFAM" id="SSF89043">
    <property type="entry name" value="Soluble domain of poliovirus core protein 3a"/>
    <property type="match status" value="1"/>
</dbReference>
<dbReference type="SUPFAM" id="SSF50494">
    <property type="entry name" value="Trypsin-like serine proteases"/>
    <property type="match status" value="2"/>
</dbReference>
<dbReference type="PROSITE" id="PS51874">
    <property type="entry name" value="PCV_3C_PRO"/>
    <property type="match status" value="1"/>
</dbReference>
<dbReference type="PROSITE" id="PS50507">
    <property type="entry name" value="RDRP_SSRNA_POS"/>
    <property type="match status" value="1"/>
</dbReference>
<dbReference type="PROSITE" id="PS51218">
    <property type="entry name" value="SF3_HELICASE_2"/>
    <property type="match status" value="1"/>
</dbReference>